<feature type="chain" id="PRO_1000204834" description="Phenylalanine--tRNA ligase alpha subunit">
    <location>
        <begin position="1"/>
        <end position="349"/>
    </location>
</feature>
<feature type="binding site" evidence="1">
    <location>
        <position position="258"/>
    </location>
    <ligand>
        <name>Mg(2+)</name>
        <dbReference type="ChEBI" id="CHEBI:18420"/>
        <note>shared with beta subunit</note>
    </ligand>
</feature>
<sequence>MENIETILRLAEDKILLVQNLKALQEYKVEFLGKNGIVTGELKKLGSLNEQERKEFGLKINKLKDKIQNIIKAKAEILEEQELNFKLAADKIDLTIPARRYKQGSIHPITQCSEELIQVFSQFGFTIENGPNIENDFYNFTALNFEDDHPARQMHDTFYLKSQENNKPLLLRTHTSTVQIRAMKNGKPPFRFIAPGRTYRSDSDMTHTPMFHQIEGLVMDKNINMGHLKYVITTFIKSFFENSNIELRFRPSFFPFTEPSSEVDIRMNKNDKWLEVLGCGMVHPNVLKNVGIDSSEYQGFAFGLGVERFAMLKYNIKDLRQFFEGDMRWLKHYNFGSFDIPNLAGGLTK</sequence>
<evidence type="ECO:0000255" key="1">
    <source>
        <dbReference type="HAMAP-Rule" id="MF_00281"/>
    </source>
</evidence>
<comment type="catalytic activity">
    <reaction evidence="1">
        <text>tRNA(Phe) + L-phenylalanine + ATP = L-phenylalanyl-tRNA(Phe) + AMP + diphosphate + H(+)</text>
        <dbReference type="Rhea" id="RHEA:19413"/>
        <dbReference type="Rhea" id="RHEA-COMP:9668"/>
        <dbReference type="Rhea" id="RHEA-COMP:9699"/>
        <dbReference type="ChEBI" id="CHEBI:15378"/>
        <dbReference type="ChEBI" id="CHEBI:30616"/>
        <dbReference type="ChEBI" id="CHEBI:33019"/>
        <dbReference type="ChEBI" id="CHEBI:58095"/>
        <dbReference type="ChEBI" id="CHEBI:78442"/>
        <dbReference type="ChEBI" id="CHEBI:78531"/>
        <dbReference type="ChEBI" id="CHEBI:456215"/>
        <dbReference type="EC" id="6.1.1.20"/>
    </reaction>
</comment>
<comment type="cofactor">
    <cofactor evidence="1">
        <name>Mg(2+)</name>
        <dbReference type="ChEBI" id="CHEBI:18420"/>
    </cofactor>
    <text evidence="1">Binds 2 magnesium ions per tetramer.</text>
</comment>
<comment type="subunit">
    <text evidence="1">Tetramer of two alpha and two beta subunits.</text>
</comment>
<comment type="subcellular location">
    <subcellularLocation>
        <location evidence="1">Cytoplasm</location>
    </subcellularLocation>
</comment>
<comment type="similarity">
    <text evidence="1">Belongs to the class-II aminoacyl-tRNA synthetase family. Phe-tRNA synthetase alpha subunit type 1 subfamily.</text>
</comment>
<protein>
    <recommendedName>
        <fullName evidence="1">Phenylalanine--tRNA ligase alpha subunit</fullName>
        <ecNumber evidence="1">6.1.1.20</ecNumber>
    </recommendedName>
    <alternativeName>
        <fullName evidence="1">Phenylalanyl-tRNA synthetase alpha subunit</fullName>
        <shortName evidence="1">PheRS</shortName>
    </alternativeName>
</protein>
<organism>
    <name type="scientific">Rickettsia africae (strain ESF-5)</name>
    <dbReference type="NCBI Taxonomy" id="347255"/>
    <lineage>
        <taxon>Bacteria</taxon>
        <taxon>Pseudomonadati</taxon>
        <taxon>Pseudomonadota</taxon>
        <taxon>Alphaproteobacteria</taxon>
        <taxon>Rickettsiales</taxon>
        <taxon>Rickettsiaceae</taxon>
        <taxon>Rickettsieae</taxon>
        <taxon>Rickettsia</taxon>
        <taxon>spotted fever group</taxon>
    </lineage>
</organism>
<keyword id="KW-0030">Aminoacyl-tRNA synthetase</keyword>
<keyword id="KW-0067">ATP-binding</keyword>
<keyword id="KW-0963">Cytoplasm</keyword>
<keyword id="KW-0436">Ligase</keyword>
<keyword id="KW-0460">Magnesium</keyword>
<keyword id="KW-0479">Metal-binding</keyword>
<keyword id="KW-0547">Nucleotide-binding</keyword>
<keyword id="KW-0648">Protein biosynthesis</keyword>
<reference key="1">
    <citation type="journal article" date="2009" name="BMC Genomics">
        <title>Analysis of the Rickettsia africae genome reveals that virulence acquisition in Rickettsia species may be explained by genome reduction.</title>
        <authorList>
            <person name="Fournier P.-E."/>
            <person name="El Karkouri K."/>
            <person name="Leroy Q."/>
            <person name="Robert C."/>
            <person name="Giumelli B."/>
            <person name="Renesto P."/>
            <person name="Socolovschi C."/>
            <person name="Parola P."/>
            <person name="Audic S."/>
            <person name="Raoult D."/>
        </authorList>
    </citation>
    <scope>NUCLEOTIDE SEQUENCE [LARGE SCALE GENOMIC DNA]</scope>
    <source>
        <strain>ESF-5</strain>
    </source>
</reference>
<name>SYFA_RICAE</name>
<dbReference type="EC" id="6.1.1.20" evidence="1"/>
<dbReference type="EMBL" id="CP001612">
    <property type="protein sequence ID" value="ACP53453.1"/>
    <property type="molecule type" value="Genomic_DNA"/>
</dbReference>
<dbReference type="RefSeq" id="WP_012719675.1">
    <property type="nucleotide sequence ID" value="NC_012633.1"/>
</dbReference>
<dbReference type="SMR" id="C3PNE3"/>
<dbReference type="KEGG" id="raf:RAF_ORF0542"/>
<dbReference type="HOGENOM" id="CLU_025086_0_1_5"/>
<dbReference type="Proteomes" id="UP000002305">
    <property type="component" value="Chromosome"/>
</dbReference>
<dbReference type="GO" id="GO:0005737">
    <property type="term" value="C:cytoplasm"/>
    <property type="evidence" value="ECO:0007669"/>
    <property type="project" value="UniProtKB-SubCell"/>
</dbReference>
<dbReference type="GO" id="GO:0005524">
    <property type="term" value="F:ATP binding"/>
    <property type="evidence" value="ECO:0007669"/>
    <property type="project" value="UniProtKB-UniRule"/>
</dbReference>
<dbReference type="GO" id="GO:0000287">
    <property type="term" value="F:magnesium ion binding"/>
    <property type="evidence" value="ECO:0007669"/>
    <property type="project" value="UniProtKB-UniRule"/>
</dbReference>
<dbReference type="GO" id="GO:0004826">
    <property type="term" value="F:phenylalanine-tRNA ligase activity"/>
    <property type="evidence" value="ECO:0007669"/>
    <property type="project" value="UniProtKB-UniRule"/>
</dbReference>
<dbReference type="GO" id="GO:0000049">
    <property type="term" value="F:tRNA binding"/>
    <property type="evidence" value="ECO:0007669"/>
    <property type="project" value="InterPro"/>
</dbReference>
<dbReference type="GO" id="GO:0006432">
    <property type="term" value="P:phenylalanyl-tRNA aminoacylation"/>
    <property type="evidence" value="ECO:0007669"/>
    <property type="project" value="UniProtKB-UniRule"/>
</dbReference>
<dbReference type="CDD" id="cd00496">
    <property type="entry name" value="PheRS_alpha_core"/>
    <property type="match status" value="1"/>
</dbReference>
<dbReference type="FunFam" id="3.30.930.10:FF:000003">
    <property type="entry name" value="Phenylalanine--tRNA ligase alpha subunit"/>
    <property type="match status" value="1"/>
</dbReference>
<dbReference type="Gene3D" id="3.30.930.10">
    <property type="entry name" value="Bira Bifunctional Protein, Domain 2"/>
    <property type="match status" value="1"/>
</dbReference>
<dbReference type="HAMAP" id="MF_00281">
    <property type="entry name" value="Phe_tRNA_synth_alpha1"/>
    <property type="match status" value="1"/>
</dbReference>
<dbReference type="InterPro" id="IPR006195">
    <property type="entry name" value="aa-tRNA-synth_II"/>
</dbReference>
<dbReference type="InterPro" id="IPR045864">
    <property type="entry name" value="aa-tRNA-synth_II/BPL/LPL"/>
</dbReference>
<dbReference type="InterPro" id="IPR004529">
    <property type="entry name" value="Phe-tRNA-synth_IIc_asu"/>
</dbReference>
<dbReference type="InterPro" id="IPR004188">
    <property type="entry name" value="Phe-tRNA_ligase_II_N"/>
</dbReference>
<dbReference type="InterPro" id="IPR022911">
    <property type="entry name" value="Phe_tRNA_ligase_alpha1_bac"/>
</dbReference>
<dbReference type="InterPro" id="IPR002319">
    <property type="entry name" value="Phenylalanyl-tRNA_Synthase"/>
</dbReference>
<dbReference type="InterPro" id="IPR010978">
    <property type="entry name" value="tRNA-bd_arm"/>
</dbReference>
<dbReference type="NCBIfam" id="TIGR00468">
    <property type="entry name" value="pheS"/>
    <property type="match status" value="1"/>
</dbReference>
<dbReference type="PANTHER" id="PTHR11538:SF41">
    <property type="entry name" value="PHENYLALANINE--TRNA LIGASE, MITOCHONDRIAL"/>
    <property type="match status" value="1"/>
</dbReference>
<dbReference type="PANTHER" id="PTHR11538">
    <property type="entry name" value="PHENYLALANYL-TRNA SYNTHETASE"/>
    <property type="match status" value="1"/>
</dbReference>
<dbReference type="Pfam" id="PF02912">
    <property type="entry name" value="Phe_tRNA-synt_N"/>
    <property type="match status" value="1"/>
</dbReference>
<dbReference type="Pfam" id="PF01409">
    <property type="entry name" value="tRNA-synt_2d"/>
    <property type="match status" value="1"/>
</dbReference>
<dbReference type="SUPFAM" id="SSF55681">
    <property type="entry name" value="Class II aaRS and biotin synthetases"/>
    <property type="match status" value="1"/>
</dbReference>
<dbReference type="SUPFAM" id="SSF46589">
    <property type="entry name" value="tRNA-binding arm"/>
    <property type="match status" value="1"/>
</dbReference>
<dbReference type="PROSITE" id="PS50862">
    <property type="entry name" value="AA_TRNA_LIGASE_II"/>
    <property type="match status" value="1"/>
</dbReference>
<proteinExistence type="inferred from homology"/>
<accession>C3PNE3</accession>
<gene>
    <name evidence="1" type="primary">pheS</name>
    <name type="ordered locus">RAF_ORF0542</name>
</gene>